<sequence length="149" mass="16075">MPTVDLKILDARLADQQPAYATPGSAGLDLRAAIDAETEIRPGETRLIPTGIALHLEDPRYAAMILPRSGLGHKHGIVLGNLVGLIDSDYQGQVFVSVWNRGHETFRLAPLDRIAQMVIVPVVQVDFRVVDDFTSSSRGSGGFGSTGRQ</sequence>
<proteinExistence type="inferred from homology"/>
<keyword id="KW-0378">Hydrolase</keyword>
<keyword id="KW-0460">Magnesium</keyword>
<keyword id="KW-0479">Metal-binding</keyword>
<keyword id="KW-0546">Nucleotide metabolism</keyword>
<keyword id="KW-1185">Reference proteome</keyword>
<feature type="chain" id="PRO_1000119239" description="Deoxyuridine 5'-triphosphate nucleotidohydrolase">
    <location>
        <begin position="1"/>
        <end position="149"/>
    </location>
</feature>
<feature type="binding site" evidence="1">
    <location>
        <begin position="68"/>
        <end position="70"/>
    </location>
    <ligand>
        <name>substrate</name>
    </ligand>
</feature>
<feature type="binding site" evidence="1">
    <location>
        <position position="81"/>
    </location>
    <ligand>
        <name>substrate</name>
    </ligand>
</feature>
<feature type="binding site" evidence="1">
    <location>
        <begin position="85"/>
        <end position="87"/>
    </location>
    <ligand>
        <name>substrate</name>
    </ligand>
</feature>
<gene>
    <name evidence="1" type="primary">dut</name>
    <name type="ordered locus">LHK_01910</name>
</gene>
<evidence type="ECO:0000255" key="1">
    <source>
        <dbReference type="HAMAP-Rule" id="MF_00116"/>
    </source>
</evidence>
<comment type="function">
    <text evidence="1">This enzyme is involved in nucleotide metabolism: it produces dUMP, the immediate precursor of thymidine nucleotides and it decreases the intracellular concentration of dUTP so that uracil cannot be incorporated into DNA.</text>
</comment>
<comment type="catalytic activity">
    <reaction evidence="1">
        <text>dUTP + H2O = dUMP + diphosphate + H(+)</text>
        <dbReference type="Rhea" id="RHEA:10248"/>
        <dbReference type="ChEBI" id="CHEBI:15377"/>
        <dbReference type="ChEBI" id="CHEBI:15378"/>
        <dbReference type="ChEBI" id="CHEBI:33019"/>
        <dbReference type="ChEBI" id="CHEBI:61555"/>
        <dbReference type="ChEBI" id="CHEBI:246422"/>
        <dbReference type="EC" id="3.6.1.23"/>
    </reaction>
</comment>
<comment type="cofactor">
    <cofactor evidence="1">
        <name>Mg(2+)</name>
        <dbReference type="ChEBI" id="CHEBI:18420"/>
    </cofactor>
</comment>
<comment type="pathway">
    <text evidence="1">Pyrimidine metabolism; dUMP biosynthesis; dUMP from dCTP (dUTP route): step 2/2.</text>
</comment>
<comment type="similarity">
    <text evidence="1">Belongs to the dUTPase family.</text>
</comment>
<organism>
    <name type="scientific">Laribacter hongkongensis (strain HLHK9)</name>
    <dbReference type="NCBI Taxonomy" id="557598"/>
    <lineage>
        <taxon>Bacteria</taxon>
        <taxon>Pseudomonadati</taxon>
        <taxon>Pseudomonadota</taxon>
        <taxon>Betaproteobacteria</taxon>
        <taxon>Neisseriales</taxon>
        <taxon>Aquaspirillaceae</taxon>
        <taxon>Laribacter</taxon>
    </lineage>
</organism>
<name>DUT_LARHH</name>
<protein>
    <recommendedName>
        <fullName evidence="1">Deoxyuridine 5'-triphosphate nucleotidohydrolase</fullName>
        <shortName evidence="1">dUTPase</shortName>
        <ecNumber evidence="1">3.6.1.23</ecNumber>
    </recommendedName>
    <alternativeName>
        <fullName evidence="1">dUTP pyrophosphatase</fullName>
    </alternativeName>
</protein>
<accession>C1D8V4</accession>
<reference key="1">
    <citation type="journal article" date="2009" name="PLoS Genet.">
        <title>The complete genome and proteome of Laribacter hongkongensis reveal potential mechanisms for adaptations to different temperatures and habitats.</title>
        <authorList>
            <person name="Woo P.C.Y."/>
            <person name="Lau S.K.P."/>
            <person name="Tse H."/>
            <person name="Teng J.L.L."/>
            <person name="Curreem S.O."/>
            <person name="Tsang A.K.L."/>
            <person name="Fan R.Y.Y."/>
            <person name="Wong G.K.M."/>
            <person name="Huang Y."/>
            <person name="Loman N.J."/>
            <person name="Snyder L.A.S."/>
            <person name="Cai J.J."/>
            <person name="Huang J.-D."/>
            <person name="Mak W."/>
            <person name="Pallen M.J."/>
            <person name="Lok S."/>
            <person name="Yuen K.-Y."/>
        </authorList>
    </citation>
    <scope>NUCLEOTIDE SEQUENCE [LARGE SCALE GENOMIC DNA]</scope>
    <source>
        <strain>HLHK9</strain>
    </source>
</reference>
<dbReference type="EC" id="3.6.1.23" evidence="1"/>
<dbReference type="EMBL" id="CP001154">
    <property type="protein sequence ID" value="ACO74894.1"/>
    <property type="molecule type" value="Genomic_DNA"/>
</dbReference>
<dbReference type="RefSeq" id="WP_012697380.1">
    <property type="nucleotide sequence ID" value="NC_012559.1"/>
</dbReference>
<dbReference type="SMR" id="C1D8V4"/>
<dbReference type="STRING" id="557598.LHK_01910"/>
<dbReference type="GeneID" id="75108713"/>
<dbReference type="KEGG" id="lhk:LHK_01910"/>
<dbReference type="eggNOG" id="COG0756">
    <property type="taxonomic scope" value="Bacteria"/>
</dbReference>
<dbReference type="HOGENOM" id="CLU_068508_1_1_4"/>
<dbReference type="UniPathway" id="UPA00610">
    <property type="reaction ID" value="UER00666"/>
</dbReference>
<dbReference type="Proteomes" id="UP000002010">
    <property type="component" value="Chromosome"/>
</dbReference>
<dbReference type="GO" id="GO:0004170">
    <property type="term" value="F:dUTP diphosphatase activity"/>
    <property type="evidence" value="ECO:0007669"/>
    <property type="project" value="UniProtKB-UniRule"/>
</dbReference>
<dbReference type="GO" id="GO:0000287">
    <property type="term" value="F:magnesium ion binding"/>
    <property type="evidence" value="ECO:0007669"/>
    <property type="project" value="UniProtKB-UniRule"/>
</dbReference>
<dbReference type="GO" id="GO:0006226">
    <property type="term" value="P:dUMP biosynthetic process"/>
    <property type="evidence" value="ECO:0007669"/>
    <property type="project" value="UniProtKB-UniRule"/>
</dbReference>
<dbReference type="GO" id="GO:0046081">
    <property type="term" value="P:dUTP catabolic process"/>
    <property type="evidence" value="ECO:0007669"/>
    <property type="project" value="InterPro"/>
</dbReference>
<dbReference type="CDD" id="cd07557">
    <property type="entry name" value="trimeric_dUTPase"/>
    <property type="match status" value="1"/>
</dbReference>
<dbReference type="FunFam" id="2.70.40.10:FF:000002">
    <property type="entry name" value="dUTP diphosphatase"/>
    <property type="match status" value="1"/>
</dbReference>
<dbReference type="Gene3D" id="2.70.40.10">
    <property type="match status" value="1"/>
</dbReference>
<dbReference type="HAMAP" id="MF_00116">
    <property type="entry name" value="dUTPase_bact"/>
    <property type="match status" value="1"/>
</dbReference>
<dbReference type="InterPro" id="IPR008181">
    <property type="entry name" value="dUTPase"/>
</dbReference>
<dbReference type="InterPro" id="IPR029054">
    <property type="entry name" value="dUTPase-like"/>
</dbReference>
<dbReference type="InterPro" id="IPR036157">
    <property type="entry name" value="dUTPase-like_sf"/>
</dbReference>
<dbReference type="InterPro" id="IPR033704">
    <property type="entry name" value="dUTPase_trimeric"/>
</dbReference>
<dbReference type="NCBIfam" id="TIGR00576">
    <property type="entry name" value="dut"/>
    <property type="match status" value="1"/>
</dbReference>
<dbReference type="NCBIfam" id="NF001862">
    <property type="entry name" value="PRK00601.1"/>
    <property type="match status" value="1"/>
</dbReference>
<dbReference type="PANTHER" id="PTHR11241">
    <property type="entry name" value="DEOXYURIDINE 5'-TRIPHOSPHATE NUCLEOTIDOHYDROLASE"/>
    <property type="match status" value="1"/>
</dbReference>
<dbReference type="PANTHER" id="PTHR11241:SF0">
    <property type="entry name" value="DEOXYURIDINE 5'-TRIPHOSPHATE NUCLEOTIDOHYDROLASE"/>
    <property type="match status" value="1"/>
</dbReference>
<dbReference type="Pfam" id="PF00692">
    <property type="entry name" value="dUTPase"/>
    <property type="match status" value="1"/>
</dbReference>
<dbReference type="SUPFAM" id="SSF51283">
    <property type="entry name" value="dUTPase-like"/>
    <property type="match status" value="1"/>
</dbReference>